<dbReference type="EC" id="4.1.1.37" evidence="1"/>
<dbReference type="EMBL" id="CP000439">
    <property type="protein sequence ID" value="ABK90521.1"/>
    <property type="molecule type" value="Genomic_DNA"/>
</dbReference>
<dbReference type="RefSeq" id="WP_003041286.1">
    <property type="nucleotide sequence ID" value="NZ_CP009633.1"/>
</dbReference>
<dbReference type="SMR" id="A0Q8F6"/>
<dbReference type="KEGG" id="ftn:FTN_1664"/>
<dbReference type="KEGG" id="ftx:AW25_324"/>
<dbReference type="BioCyc" id="FTUL401614:G1G75-1725-MONOMER"/>
<dbReference type="UniPathway" id="UPA00251">
    <property type="reaction ID" value="UER00321"/>
</dbReference>
<dbReference type="Proteomes" id="UP000000762">
    <property type="component" value="Chromosome"/>
</dbReference>
<dbReference type="GO" id="GO:0005829">
    <property type="term" value="C:cytosol"/>
    <property type="evidence" value="ECO:0007669"/>
    <property type="project" value="TreeGrafter"/>
</dbReference>
<dbReference type="GO" id="GO:0004853">
    <property type="term" value="F:uroporphyrinogen decarboxylase activity"/>
    <property type="evidence" value="ECO:0007669"/>
    <property type="project" value="UniProtKB-UniRule"/>
</dbReference>
<dbReference type="GO" id="GO:0006782">
    <property type="term" value="P:protoporphyrinogen IX biosynthetic process"/>
    <property type="evidence" value="ECO:0007669"/>
    <property type="project" value="UniProtKB-UniRule"/>
</dbReference>
<dbReference type="CDD" id="cd00717">
    <property type="entry name" value="URO-D"/>
    <property type="match status" value="1"/>
</dbReference>
<dbReference type="FunFam" id="3.20.20.210:FF:000008">
    <property type="entry name" value="Uroporphyrinogen decarboxylase"/>
    <property type="match status" value="1"/>
</dbReference>
<dbReference type="Gene3D" id="3.20.20.210">
    <property type="match status" value="1"/>
</dbReference>
<dbReference type="HAMAP" id="MF_00218">
    <property type="entry name" value="URO_D"/>
    <property type="match status" value="1"/>
</dbReference>
<dbReference type="InterPro" id="IPR038071">
    <property type="entry name" value="UROD/MetE-like_sf"/>
</dbReference>
<dbReference type="InterPro" id="IPR006361">
    <property type="entry name" value="Uroporphyrinogen_deCO2ase_HemE"/>
</dbReference>
<dbReference type="InterPro" id="IPR000257">
    <property type="entry name" value="Uroporphyrinogen_deCOase"/>
</dbReference>
<dbReference type="NCBIfam" id="TIGR01464">
    <property type="entry name" value="hemE"/>
    <property type="match status" value="1"/>
</dbReference>
<dbReference type="PANTHER" id="PTHR21091">
    <property type="entry name" value="METHYLTETRAHYDROFOLATE:HOMOCYSTEINE METHYLTRANSFERASE RELATED"/>
    <property type="match status" value="1"/>
</dbReference>
<dbReference type="PANTHER" id="PTHR21091:SF169">
    <property type="entry name" value="UROPORPHYRINOGEN DECARBOXYLASE"/>
    <property type="match status" value="1"/>
</dbReference>
<dbReference type="Pfam" id="PF01208">
    <property type="entry name" value="URO-D"/>
    <property type="match status" value="1"/>
</dbReference>
<dbReference type="SUPFAM" id="SSF51726">
    <property type="entry name" value="UROD/MetE-like"/>
    <property type="match status" value="1"/>
</dbReference>
<dbReference type="PROSITE" id="PS00906">
    <property type="entry name" value="UROD_1"/>
    <property type="match status" value="1"/>
</dbReference>
<dbReference type="PROSITE" id="PS00907">
    <property type="entry name" value="UROD_2"/>
    <property type="match status" value="1"/>
</dbReference>
<feature type="chain" id="PRO_0000325642" description="Uroporphyrinogen decarboxylase">
    <location>
        <begin position="1"/>
        <end position="344"/>
    </location>
</feature>
<feature type="binding site" evidence="1">
    <location>
        <begin position="23"/>
        <end position="27"/>
    </location>
    <ligand>
        <name>substrate</name>
    </ligand>
</feature>
<feature type="binding site" evidence="1">
    <location>
        <position position="73"/>
    </location>
    <ligand>
        <name>substrate</name>
    </ligand>
</feature>
<feature type="binding site" evidence="1">
    <location>
        <position position="149"/>
    </location>
    <ligand>
        <name>substrate</name>
    </ligand>
</feature>
<feature type="binding site" evidence="1">
    <location>
        <position position="204"/>
    </location>
    <ligand>
        <name>substrate</name>
    </ligand>
</feature>
<feature type="binding site" evidence="1">
    <location>
        <position position="321"/>
    </location>
    <ligand>
        <name>substrate</name>
    </ligand>
</feature>
<feature type="site" description="Transition state stabilizer" evidence="1">
    <location>
        <position position="73"/>
    </location>
</feature>
<proteinExistence type="inferred from homology"/>
<accession>A0Q8F6</accession>
<name>DCUP_FRATN</name>
<evidence type="ECO:0000255" key="1">
    <source>
        <dbReference type="HAMAP-Rule" id="MF_00218"/>
    </source>
</evidence>
<gene>
    <name evidence="1" type="primary">hemE</name>
    <name type="ordered locus">FTN_1664</name>
</gene>
<reference key="1">
    <citation type="journal article" date="2007" name="Genome Biol.">
        <title>Comparison of Francisella tularensis genomes reveals evolutionary events associated with the emergence of human pathogenic strains.</title>
        <authorList>
            <person name="Rohmer L."/>
            <person name="Fong C."/>
            <person name="Abmayr S."/>
            <person name="Wasnick M."/>
            <person name="Larson Freeman T.J."/>
            <person name="Radey M."/>
            <person name="Guina T."/>
            <person name="Svensson K."/>
            <person name="Hayden H.S."/>
            <person name="Jacobs M."/>
            <person name="Gallagher L.A."/>
            <person name="Manoil C."/>
            <person name="Ernst R.K."/>
            <person name="Drees B."/>
            <person name="Buckley D."/>
            <person name="Haugen E."/>
            <person name="Bovee D."/>
            <person name="Zhou Y."/>
            <person name="Chang J."/>
            <person name="Levy R."/>
            <person name="Lim R."/>
            <person name="Gillett W."/>
            <person name="Guenthener D."/>
            <person name="Kang A."/>
            <person name="Shaffer S.A."/>
            <person name="Taylor G."/>
            <person name="Chen J."/>
            <person name="Gallis B."/>
            <person name="D'Argenio D.A."/>
            <person name="Forsman M."/>
            <person name="Olson M.V."/>
            <person name="Goodlett D.R."/>
            <person name="Kaul R."/>
            <person name="Miller S.I."/>
            <person name="Brittnacher M.J."/>
        </authorList>
    </citation>
    <scope>NUCLEOTIDE SEQUENCE [LARGE SCALE GENOMIC DNA]</scope>
    <source>
        <strain>U112</strain>
    </source>
</reference>
<protein>
    <recommendedName>
        <fullName evidence="1">Uroporphyrinogen decarboxylase</fullName>
        <shortName evidence="1">UPD</shortName>
        <shortName evidence="1">URO-D</shortName>
        <ecNumber evidence="1">4.1.1.37</ecNumber>
    </recommendedName>
</protein>
<keyword id="KW-0963">Cytoplasm</keyword>
<keyword id="KW-0210">Decarboxylase</keyword>
<keyword id="KW-0456">Lyase</keyword>
<keyword id="KW-0627">Porphyrin biosynthesis</keyword>
<organism>
    <name type="scientific">Francisella tularensis subsp. novicida (strain U112)</name>
    <dbReference type="NCBI Taxonomy" id="401614"/>
    <lineage>
        <taxon>Bacteria</taxon>
        <taxon>Pseudomonadati</taxon>
        <taxon>Pseudomonadota</taxon>
        <taxon>Gammaproteobacteria</taxon>
        <taxon>Thiotrichales</taxon>
        <taxon>Francisellaceae</taxon>
        <taxon>Francisella</taxon>
    </lineage>
</organism>
<comment type="function">
    <text evidence="1">Catalyzes the decarboxylation of four acetate groups of uroporphyrinogen-III to yield coproporphyrinogen-III.</text>
</comment>
<comment type="catalytic activity">
    <reaction evidence="1">
        <text>uroporphyrinogen III + 4 H(+) = coproporphyrinogen III + 4 CO2</text>
        <dbReference type="Rhea" id="RHEA:19865"/>
        <dbReference type="ChEBI" id="CHEBI:15378"/>
        <dbReference type="ChEBI" id="CHEBI:16526"/>
        <dbReference type="ChEBI" id="CHEBI:57308"/>
        <dbReference type="ChEBI" id="CHEBI:57309"/>
        <dbReference type="EC" id="4.1.1.37"/>
    </reaction>
</comment>
<comment type="pathway">
    <text evidence="1">Porphyrin-containing compound metabolism; protoporphyrin-IX biosynthesis; coproporphyrinogen-III from 5-aminolevulinate: step 4/4.</text>
</comment>
<comment type="subunit">
    <text evidence="1">Homodimer.</text>
</comment>
<comment type="subcellular location">
    <subcellularLocation>
        <location evidence="1">Cytoplasm</location>
    </subcellularLocation>
</comment>
<comment type="similarity">
    <text evidence="1">Belongs to the uroporphyrinogen decarboxylase family.</text>
</comment>
<sequence length="344" mass="38921">MRKLFLDAFGEKKLDKPPVWIMRQAGRYLPEYRAVRAKFDNFMDMCRNADACCEVALHPLQRYDLDAAIVFSDILTIPEAMGMDLKFIKGTGPVFSEPIQSQKDLDKLKSIEDSIGSLDYVYNAVKTTSSTINVPLIGFTGSPWTLAAYMIEGSGSKQFNKLRKMMYANPQLMHSLLQRLADITIIYLLEQVKAGASCVMIFDTWGGILPLEHYKNFSLKYMEYIAKNVKQKINIPIVFFTKGGSNFFEEIKDKSCDGVGVDWSVTLKQARHRIGVGKVLQGNFDPAFLYGSKQSIRETVRANIEFIQSDKLNNYIVNLGHGIYPDIDPDSVRVMIDAIREFSA</sequence>